<feature type="signal peptide" evidence="2">
    <location>
        <begin position="1"/>
        <end position="25"/>
    </location>
</feature>
<feature type="chain" id="PRO_0000367335" description="GDSL esterase/lipase 2">
    <location>
        <begin position="26"/>
        <end position="376"/>
    </location>
</feature>
<feature type="active site" description="Nucleophile" evidence="1">
    <location>
        <position position="46"/>
    </location>
</feature>
<feature type="active site" evidence="1">
    <location>
        <position position="340"/>
    </location>
</feature>
<feature type="active site" evidence="1">
    <location>
        <position position="343"/>
    </location>
</feature>
<feature type="glycosylation site" description="N-linked (GlcNAc...) asparagine" evidence="2">
    <location>
        <position position="36"/>
    </location>
</feature>
<feature type="glycosylation site" description="N-linked (GlcNAc...) asparagine" evidence="2">
    <location>
        <position position="186"/>
    </location>
</feature>
<feature type="glycosylation site" description="N-linked (GlcNAc...) asparagine" evidence="2">
    <location>
        <position position="205"/>
    </location>
</feature>
<feature type="glycosylation site" description="N-linked (GlcNAc...) asparagine" evidence="2">
    <location>
        <position position="362"/>
    </location>
</feature>
<name>GLIP2_ARATH</name>
<protein>
    <recommendedName>
        <fullName>GDSL esterase/lipase 2</fullName>
        <ecNumber>3.1.1.-</ecNumber>
    </recommendedName>
    <alternativeName>
        <fullName>Extracellular lipase 2</fullName>
    </alternativeName>
</protein>
<accession>Q9SYF0</accession>
<accession>F4HTF4</accession>
<reference key="1">
    <citation type="journal article" date="2000" name="Nature">
        <title>Sequence and analysis of chromosome 1 of the plant Arabidopsis thaliana.</title>
        <authorList>
            <person name="Theologis A."/>
            <person name="Ecker J.R."/>
            <person name="Palm C.J."/>
            <person name="Federspiel N.A."/>
            <person name="Kaul S."/>
            <person name="White O."/>
            <person name="Alonso J."/>
            <person name="Altafi H."/>
            <person name="Araujo R."/>
            <person name="Bowman C.L."/>
            <person name="Brooks S.Y."/>
            <person name="Buehler E."/>
            <person name="Chan A."/>
            <person name="Chao Q."/>
            <person name="Chen H."/>
            <person name="Cheuk R.F."/>
            <person name="Chin C.W."/>
            <person name="Chung M.K."/>
            <person name="Conn L."/>
            <person name="Conway A.B."/>
            <person name="Conway A.R."/>
            <person name="Creasy T.H."/>
            <person name="Dewar K."/>
            <person name="Dunn P."/>
            <person name="Etgu P."/>
            <person name="Feldblyum T.V."/>
            <person name="Feng J.-D."/>
            <person name="Fong B."/>
            <person name="Fujii C.Y."/>
            <person name="Gill J.E."/>
            <person name="Goldsmith A.D."/>
            <person name="Haas B."/>
            <person name="Hansen N.F."/>
            <person name="Hughes B."/>
            <person name="Huizar L."/>
            <person name="Hunter J.L."/>
            <person name="Jenkins J."/>
            <person name="Johnson-Hopson C."/>
            <person name="Khan S."/>
            <person name="Khaykin E."/>
            <person name="Kim C.J."/>
            <person name="Koo H.L."/>
            <person name="Kremenetskaia I."/>
            <person name="Kurtz D.B."/>
            <person name="Kwan A."/>
            <person name="Lam B."/>
            <person name="Langin-Hooper S."/>
            <person name="Lee A."/>
            <person name="Lee J.M."/>
            <person name="Lenz C.A."/>
            <person name="Li J.H."/>
            <person name="Li Y.-P."/>
            <person name="Lin X."/>
            <person name="Liu S.X."/>
            <person name="Liu Z.A."/>
            <person name="Luros J.S."/>
            <person name="Maiti R."/>
            <person name="Marziali A."/>
            <person name="Militscher J."/>
            <person name="Miranda M."/>
            <person name="Nguyen M."/>
            <person name="Nierman W.C."/>
            <person name="Osborne B.I."/>
            <person name="Pai G."/>
            <person name="Peterson J."/>
            <person name="Pham P.K."/>
            <person name="Rizzo M."/>
            <person name="Rooney T."/>
            <person name="Rowley D."/>
            <person name="Sakano H."/>
            <person name="Salzberg S.L."/>
            <person name="Schwartz J.R."/>
            <person name="Shinn P."/>
            <person name="Southwick A.M."/>
            <person name="Sun H."/>
            <person name="Tallon L.J."/>
            <person name="Tambunga G."/>
            <person name="Toriumi M.J."/>
            <person name="Town C.D."/>
            <person name="Utterback T."/>
            <person name="Van Aken S."/>
            <person name="Vaysberg M."/>
            <person name="Vysotskaia V.S."/>
            <person name="Walker M."/>
            <person name="Wu D."/>
            <person name="Yu G."/>
            <person name="Fraser C.M."/>
            <person name="Venter J.C."/>
            <person name="Davis R.W."/>
        </authorList>
    </citation>
    <scope>NUCLEOTIDE SEQUENCE [LARGE SCALE GENOMIC DNA]</scope>
    <source>
        <strain>cv. Columbia</strain>
    </source>
</reference>
<reference key="2">
    <citation type="journal article" date="2017" name="Plant J.">
        <title>Araport11: a complete reannotation of the Arabidopsis thaliana reference genome.</title>
        <authorList>
            <person name="Cheng C.Y."/>
            <person name="Krishnakumar V."/>
            <person name="Chan A.P."/>
            <person name="Thibaud-Nissen F."/>
            <person name="Schobel S."/>
            <person name="Town C.D."/>
        </authorList>
    </citation>
    <scope>GENOME REANNOTATION</scope>
    <source>
        <strain>cv. Columbia</strain>
    </source>
</reference>
<reference key="3">
    <citation type="journal article" date="2004" name="Prog. Lipid Res.">
        <title>GDSL family of serine esterases/lipases.</title>
        <authorList>
            <person name="Akoh C.C."/>
            <person name="Lee G.-C."/>
            <person name="Liaw Y.-C."/>
            <person name="Huang T.-H."/>
            <person name="Shaw J.-F."/>
        </authorList>
    </citation>
    <scope>REVIEW</scope>
</reference>
<reference key="4">
    <citation type="journal article" date="2005" name="Plant Cell">
        <title>Secretome analysis reveals an Arabidopsis lipase involved in defense against Alternaria brassicicola.</title>
        <authorList>
            <person name="Oh I.S."/>
            <person name="Park A.R."/>
            <person name="Bae M.S."/>
            <person name="Kwon S.J."/>
            <person name="Kim Y.S."/>
            <person name="Lee J.E."/>
            <person name="Kang N.Y."/>
            <person name="Lee S."/>
            <person name="Cheong H."/>
            <person name="Park O.K."/>
        </authorList>
    </citation>
    <scope>GENE FAMILY</scope>
</reference>
<reference key="5">
    <citation type="journal article" date="2008" name="Pak. J. Biol. Sci.">
        <title>Sequence analysis of GDSL lipase gene family in Arabidopsis thaliana.</title>
        <authorList>
            <person name="Ling H."/>
        </authorList>
    </citation>
    <scope>GENE FAMILY</scope>
</reference>
<reference key="6">
    <citation type="journal article" date="2009" name="Biochem. Biophys. Res. Commun.">
        <title>Arabidopsis GDSL lipase 2 plays a role in pathogen defense via negative regulation of auxin signaling.</title>
        <authorList>
            <person name="Lee D.S."/>
            <person name="Kim B.K."/>
            <person name="Kwon S.J."/>
            <person name="Jin H.C."/>
            <person name="Park O.K."/>
        </authorList>
    </citation>
    <scope>FUNCTION</scope>
    <scope>DISRUPTION PHENOTYPE</scope>
    <scope>TISSUE SPECIFICITY</scope>
    <scope>INDUCTION BY SA; JA AND ET</scope>
</reference>
<gene>
    <name type="primary">GLIP2</name>
    <name type="ordered locus">At1g53940</name>
    <name type="ORF">F15I1.2</name>
</gene>
<proteinExistence type="evidence at transcript level"/>
<dbReference type="EC" id="3.1.1.-"/>
<dbReference type="EMBL" id="AC006577">
    <property type="protein sequence ID" value="AAD25766.1"/>
    <property type="molecule type" value="Genomic_DNA"/>
</dbReference>
<dbReference type="EMBL" id="CP002684">
    <property type="protein sequence ID" value="ANM59524.1"/>
    <property type="molecule type" value="Genomic_DNA"/>
</dbReference>
<dbReference type="PIR" id="G96579">
    <property type="entry name" value="G96579"/>
</dbReference>
<dbReference type="RefSeq" id="NP_175797.2">
    <property type="nucleotide sequence ID" value="NM_104272.2"/>
</dbReference>
<dbReference type="SMR" id="Q9SYF0"/>
<dbReference type="FunCoup" id="Q9SYF0">
    <property type="interactions" value="113"/>
</dbReference>
<dbReference type="STRING" id="3702.Q9SYF0"/>
<dbReference type="GlyCosmos" id="Q9SYF0">
    <property type="glycosylation" value="4 sites, No reported glycans"/>
</dbReference>
<dbReference type="GlyGen" id="Q9SYF0">
    <property type="glycosylation" value="4 sites"/>
</dbReference>
<dbReference type="PaxDb" id="3702-AT1G53940.1"/>
<dbReference type="ProteomicsDB" id="230478"/>
<dbReference type="EnsemblPlants" id="AT1G53940.2">
    <property type="protein sequence ID" value="AT1G53940.2"/>
    <property type="gene ID" value="AT1G53940"/>
</dbReference>
<dbReference type="GeneID" id="841833"/>
<dbReference type="Gramene" id="AT1G53940.2">
    <property type="protein sequence ID" value="AT1G53940.2"/>
    <property type="gene ID" value="AT1G53940"/>
</dbReference>
<dbReference type="KEGG" id="ath:AT1G53940"/>
<dbReference type="Araport" id="AT1G53940"/>
<dbReference type="TAIR" id="AT1G53940">
    <property type="gene designation" value="GLIP2"/>
</dbReference>
<dbReference type="eggNOG" id="ENOG502QQ4G">
    <property type="taxonomic scope" value="Eukaryota"/>
</dbReference>
<dbReference type="HOGENOM" id="CLU_015101_0_2_1"/>
<dbReference type="InParanoid" id="Q9SYF0"/>
<dbReference type="OMA" id="ITDGRIM"/>
<dbReference type="PhylomeDB" id="Q9SYF0"/>
<dbReference type="BioCyc" id="ARA:AT1G53940-MONOMER"/>
<dbReference type="PRO" id="PR:Q9SYF0"/>
<dbReference type="Proteomes" id="UP000006548">
    <property type="component" value="Chromosome 1"/>
</dbReference>
<dbReference type="ExpressionAtlas" id="Q9SYF0">
    <property type="expression patterns" value="baseline and differential"/>
</dbReference>
<dbReference type="GO" id="GO:0005576">
    <property type="term" value="C:extracellular region"/>
    <property type="evidence" value="ECO:0007669"/>
    <property type="project" value="UniProtKB-SubCell"/>
</dbReference>
<dbReference type="GO" id="GO:0016298">
    <property type="term" value="F:lipase activity"/>
    <property type="evidence" value="ECO:0000314"/>
    <property type="project" value="UniProtKB"/>
</dbReference>
<dbReference type="GO" id="GO:0009734">
    <property type="term" value="P:auxin-activated signaling pathway"/>
    <property type="evidence" value="ECO:0007669"/>
    <property type="project" value="UniProtKB-KW"/>
</dbReference>
<dbReference type="GO" id="GO:0098542">
    <property type="term" value="P:defense response to other organism"/>
    <property type="evidence" value="ECO:0000315"/>
    <property type="project" value="UniProtKB"/>
</dbReference>
<dbReference type="GO" id="GO:0016042">
    <property type="term" value="P:lipid catabolic process"/>
    <property type="evidence" value="ECO:0007669"/>
    <property type="project" value="UniProtKB-KW"/>
</dbReference>
<dbReference type="GO" id="GO:0006629">
    <property type="term" value="P:lipid metabolic process"/>
    <property type="evidence" value="ECO:0000314"/>
    <property type="project" value="UniProtKB"/>
</dbReference>
<dbReference type="GO" id="GO:0010930">
    <property type="term" value="P:negative regulation of auxin mediated signaling pathway"/>
    <property type="evidence" value="ECO:0000315"/>
    <property type="project" value="UniProtKB"/>
</dbReference>
<dbReference type="GO" id="GO:0009723">
    <property type="term" value="P:response to ethylene"/>
    <property type="evidence" value="ECO:0000270"/>
    <property type="project" value="UniProtKB"/>
</dbReference>
<dbReference type="GO" id="GO:0009753">
    <property type="term" value="P:response to jasmonic acid"/>
    <property type="evidence" value="ECO:0000270"/>
    <property type="project" value="UniProtKB"/>
</dbReference>
<dbReference type="GO" id="GO:0009751">
    <property type="term" value="P:response to salicylic acid"/>
    <property type="evidence" value="ECO:0000270"/>
    <property type="project" value="UniProtKB"/>
</dbReference>
<dbReference type="CDD" id="cd01837">
    <property type="entry name" value="SGNH_plant_lipase_like"/>
    <property type="match status" value="1"/>
</dbReference>
<dbReference type="Gene3D" id="3.40.50.1110">
    <property type="entry name" value="SGNH hydrolase"/>
    <property type="match status" value="1"/>
</dbReference>
<dbReference type="InterPro" id="IPR001087">
    <property type="entry name" value="GDSL"/>
</dbReference>
<dbReference type="InterPro" id="IPR044552">
    <property type="entry name" value="GLIP1-5/GLL25"/>
</dbReference>
<dbReference type="InterPro" id="IPR008265">
    <property type="entry name" value="Lipase_GDSL_AS"/>
</dbReference>
<dbReference type="InterPro" id="IPR036514">
    <property type="entry name" value="SGNH_hydro_sf"/>
</dbReference>
<dbReference type="InterPro" id="IPR035669">
    <property type="entry name" value="SGNH_plant_lipase-like"/>
</dbReference>
<dbReference type="PANTHER" id="PTHR45966:SF1">
    <property type="entry name" value="GDSL ESTERASE_LIPASE 1-RELATED"/>
    <property type="match status" value="1"/>
</dbReference>
<dbReference type="PANTHER" id="PTHR45966">
    <property type="entry name" value="GDSL-LIKE LIPASE/ACYLHYDROLASE"/>
    <property type="match status" value="1"/>
</dbReference>
<dbReference type="Pfam" id="PF00657">
    <property type="entry name" value="Lipase_GDSL"/>
    <property type="match status" value="1"/>
</dbReference>
<dbReference type="SUPFAM" id="SSF52266">
    <property type="entry name" value="SGNH hydrolase"/>
    <property type="match status" value="1"/>
</dbReference>
<dbReference type="PROSITE" id="PS01098">
    <property type="entry name" value="LIPASE_GDSL_SER"/>
    <property type="match status" value="1"/>
</dbReference>
<sequence>MENSRSTLIIFFAYTTIILIGSINCRDNNNNNLVTNQSALFVFGDSVFDAGNNNYIDTLPSFRSNYWPYGQTTFKFPTGRVSDGRTIPDFIAEYAWLPLIPAYLQPSNGKNQFPYGVSFASAGAGALVGTFPGMVINLKSQLNNFKKVEKLLRSTLGEAQGKMVISRAVYLFHIGVNDYQYPFSTNSSIFQSSPQEIYVDFVVGNTTAVIKEVYKIGGRKFGFLNMGAYDCAPASLIIDQTKIGTCFKPVTELINLHNEKLESGLRRLERELSGFKYALHDYHTSLSVRMNNPSKYGFKEGKMACCGTGPLRGINTCGGRMGVSQSYELCEKVTDYLFFDHFHLTEKAHQQIAELIWSGPTNVTKPYNLQALFELN</sequence>
<keyword id="KW-0927">Auxin signaling pathway</keyword>
<keyword id="KW-0325">Glycoprotein</keyword>
<keyword id="KW-0378">Hydrolase</keyword>
<keyword id="KW-0442">Lipid degradation</keyword>
<keyword id="KW-0443">Lipid metabolism</keyword>
<keyword id="KW-0611">Plant defense</keyword>
<keyword id="KW-1185">Reference proteome</keyword>
<keyword id="KW-0964">Secreted</keyword>
<keyword id="KW-0732">Signal</keyword>
<organism>
    <name type="scientific">Arabidopsis thaliana</name>
    <name type="common">Mouse-ear cress</name>
    <dbReference type="NCBI Taxonomy" id="3702"/>
    <lineage>
        <taxon>Eukaryota</taxon>
        <taxon>Viridiplantae</taxon>
        <taxon>Streptophyta</taxon>
        <taxon>Embryophyta</taxon>
        <taxon>Tracheophyta</taxon>
        <taxon>Spermatophyta</taxon>
        <taxon>Magnoliopsida</taxon>
        <taxon>eudicotyledons</taxon>
        <taxon>Gunneridae</taxon>
        <taxon>Pentapetalae</taxon>
        <taxon>rosids</taxon>
        <taxon>malvids</taxon>
        <taxon>Brassicales</taxon>
        <taxon>Brassicaceae</taxon>
        <taxon>Camelineae</taxon>
        <taxon>Arabidopsis</taxon>
    </lineage>
</organism>
<evidence type="ECO:0000250" key="1"/>
<evidence type="ECO:0000255" key="2"/>
<evidence type="ECO:0000269" key="3">
    <source>
    </source>
</evidence>
<evidence type="ECO:0000305" key="4"/>
<comment type="function">
    <text evidence="3">Involved in the resistance to the necrotropic bacteria Erwinia carotovora, probably via negative regulation of auxin signaling. Possesses lipase and antimicrobial activities, inhibiting germination of fungal spores (e.g. Alternaria brassicicola).</text>
</comment>
<comment type="subcellular location">
    <subcellularLocation>
        <location evidence="1">Secreted</location>
    </subcellularLocation>
</comment>
<comment type="tissue specificity">
    <text evidence="3">Expressed seedlings, roots and stems.</text>
</comment>
<comment type="induction">
    <text evidence="3">In roots, by salicylic acid (SA), jasmonic acid (JA), and ethylene (ET) treatments.</text>
</comment>
<comment type="disruption phenotype">
    <text evidence="3">In glip2, enhanced auxin responses, and higher susceptibility to E.carotovora.</text>
</comment>
<comment type="similarity">
    <text evidence="4">Belongs to the 'GDSL' lipolytic enzyme family.</text>
</comment>